<dbReference type="EC" id="2.7.1.24" evidence="1"/>
<dbReference type="EMBL" id="BA000003">
    <property type="protein sequence ID" value="BAB12920.1"/>
    <property type="molecule type" value="Genomic_DNA"/>
</dbReference>
<dbReference type="RefSeq" id="NP_240034.1">
    <property type="nucleotide sequence ID" value="NC_002528.1"/>
</dbReference>
<dbReference type="RefSeq" id="WP_010896001.1">
    <property type="nucleotide sequence ID" value="NC_002528.1"/>
</dbReference>
<dbReference type="SMR" id="P57299"/>
<dbReference type="STRING" id="563178.BUAP5A_200"/>
<dbReference type="EnsemblBacteria" id="BAB12920">
    <property type="protein sequence ID" value="BAB12920"/>
    <property type="gene ID" value="BAB12920"/>
</dbReference>
<dbReference type="KEGG" id="buc:BU203"/>
<dbReference type="PATRIC" id="fig|107806.10.peg.214"/>
<dbReference type="eggNOG" id="COG0237">
    <property type="taxonomic scope" value="Bacteria"/>
</dbReference>
<dbReference type="HOGENOM" id="CLU_057180_1_2_6"/>
<dbReference type="UniPathway" id="UPA00241">
    <property type="reaction ID" value="UER00356"/>
</dbReference>
<dbReference type="Proteomes" id="UP000001806">
    <property type="component" value="Chromosome"/>
</dbReference>
<dbReference type="GO" id="GO:0005737">
    <property type="term" value="C:cytoplasm"/>
    <property type="evidence" value="ECO:0007669"/>
    <property type="project" value="UniProtKB-SubCell"/>
</dbReference>
<dbReference type="GO" id="GO:0005524">
    <property type="term" value="F:ATP binding"/>
    <property type="evidence" value="ECO:0007669"/>
    <property type="project" value="UniProtKB-UniRule"/>
</dbReference>
<dbReference type="GO" id="GO:0004140">
    <property type="term" value="F:dephospho-CoA kinase activity"/>
    <property type="evidence" value="ECO:0007669"/>
    <property type="project" value="UniProtKB-UniRule"/>
</dbReference>
<dbReference type="GO" id="GO:0015937">
    <property type="term" value="P:coenzyme A biosynthetic process"/>
    <property type="evidence" value="ECO:0007669"/>
    <property type="project" value="UniProtKB-UniRule"/>
</dbReference>
<dbReference type="CDD" id="cd02022">
    <property type="entry name" value="DPCK"/>
    <property type="match status" value="1"/>
</dbReference>
<dbReference type="Gene3D" id="3.40.50.300">
    <property type="entry name" value="P-loop containing nucleotide triphosphate hydrolases"/>
    <property type="match status" value="1"/>
</dbReference>
<dbReference type="HAMAP" id="MF_00376">
    <property type="entry name" value="Dephospho_CoA_kinase"/>
    <property type="match status" value="1"/>
</dbReference>
<dbReference type="InterPro" id="IPR001977">
    <property type="entry name" value="Depp_CoAkinase"/>
</dbReference>
<dbReference type="InterPro" id="IPR027417">
    <property type="entry name" value="P-loop_NTPase"/>
</dbReference>
<dbReference type="NCBIfam" id="TIGR00152">
    <property type="entry name" value="dephospho-CoA kinase"/>
    <property type="match status" value="1"/>
</dbReference>
<dbReference type="PANTHER" id="PTHR10695:SF46">
    <property type="entry name" value="BIFUNCTIONAL COENZYME A SYNTHASE-RELATED"/>
    <property type="match status" value="1"/>
</dbReference>
<dbReference type="PANTHER" id="PTHR10695">
    <property type="entry name" value="DEPHOSPHO-COA KINASE-RELATED"/>
    <property type="match status" value="1"/>
</dbReference>
<dbReference type="Pfam" id="PF01121">
    <property type="entry name" value="CoaE"/>
    <property type="match status" value="1"/>
</dbReference>
<dbReference type="SUPFAM" id="SSF52540">
    <property type="entry name" value="P-loop containing nucleoside triphosphate hydrolases"/>
    <property type="match status" value="1"/>
</dbReference>
<dbReference type="PROSITE" id="PS51219">
    <property type="entry name" value="DPCK"/>
    <property type="match status" value="1"/>
</dbReference>
<keyword id="KW-0067">ATP-binding</keyword>
<keyword id="KW-0173">Coenzyme A biosynthesis</keyword>
<keyword id="KW-0963">Cytoplasm</keyword>
<keyword id="KW-0418">Kinase</keyword>
<keyword id="KW-0547">Nucleotide-binding</keyword>
<keyword id="KW-1185">Reference proteome</keyword>
<keyword id="KW-0808">Transferase</keyword>
<organism>
    <name type="scientific">Buchnera aphidicola subsp. Acyrthosiphon pisum (strain APS)</name>
    <name type="common">Acyrthosiphon pisum symbiotic bacterium</name>
    <dbReference type="NCBI Taxonomy" id="107806"/>
    <lineage>
        <taxon>Bacteria</taxon>
        <taxon>Pseudomonadati</taxon>
        <taxon>Pseudomonadota</taxon>
        <taxon>Gammaproteobacteria</taxon>
        <taxon>Enterobacterales</taxon>
        <taxon>Erwiniaceae</taxon>
        <taxon>Buchnera</taxon>
    </lineage>
</organism>
<protein>
    <recommendedName>
        <fullName evidence="1">Dephospho-CoA kinase</fullName>
        <ecNumber evidence="1">2.7.1.24</ecNumber>
    </recommendedName>
    <alternativeName>
        <fullName evidence="1">Dephosphocoenzyme A kinase</fullName>
    </alternativeName>
</protein>
<evidence type="ECO:0000255" key="1">
    <source>
        <dbReference type="HAMAP-Rule" id="MF_00376"/>
    </source>
</evidence>
<evidence type="ECO:0000305" key="2"/>
<name>COAE_BUCAI</name>
<sequence length="217" mass="25718">MTYIVALTGGISSGKTTISNGFKKIGINVIDTDIIAKNIIEKNLQVSFSIKRKFGKKILNIDNSINRLLLRQYVFNNHHHRLWLENLLHPKIYQESKHQIKMTQSNWCLWVVPLLVEKKLEKKAHRILLIDTPVKEQIKRTVRRDKISFLEAKKIIALQSSRKTRISLSDDIIFNKKNFKKINLYIYYFNLLYSHLSRIYNKNKTINIKKNFLTKFY</sequence>
<proteinExistence type="inferred from homology"/>
<gene>
    <name evidence="1" type="primary">coaE</name>
    <name type="ordered locus">BU203</name>
</gene>
<feature type="chain" id="PRO_0000172919" description="Dephospho-CoA kinase">
    <location>
        <begin position="1"/>
        <end position="217"/>
    </location>
</feature>
<feature type="domain" description="DPCK" evidence="1">
    <location>
        <begin position="4"/>
        <end position="203"/>
    </location>
</feature>
<feature type="binding site" evidence="1">
    <location>
        <begin position="12"/>
        <end position="17"/>
    </location>
    <ligand>
        <name>ATP</name>
        <dbReference type="ChEBI" id="CHEBI:30616"/>
    </ligand>
</feature>
<comment type="function">
    <text evidence="1">Catalyzes the phosphorylation of the 3'-hydroxyl group of dephosphocoenzyme A to form coenzyme A.</text>
</comment>
<comment type="catalytic activity">
    <reaction evidence="1">
        <text>3'-dephospho-CoA + ATP = ADP + CoA + H(+)</text>
        <dbReference type="Rhea" id="RHEA:18245"/>
        <dbReference type="ChEBI" id="CHEBI:15378"/>
        <dbReference type="ChEBI" id="CHEBI:30616"/>
        <dbReference type="ChEBI" id="CHEBI:57287"/>
        <dbReference type="ChEBI" id="CHEBI:57328"/>
        <dbReference type="ChEBI" id="CHEBI:456216"/>
        <dbReference type="EC" id="2.7.1.24"/>
    </reaction>
</comment>
<comment type="pathway">
    <text evidence="1">Cofactor biosynthesis; coenzyme A biosynthesis; CoA from (R)-pantothenate: step 5/5.</text>
</comment>
<comment type="subcellular location">
    <subcellularLocation>
        <location evidence="1">Cytoplasm</location>
    </subcellularLocation>
</comment>
<comment type="similarity">
    <text evidence="1 2">Belongs to the CoaE family.</text>
</comment>
<reference key="1">
    <citation type="journal article" date="2000" name="Nature">
        <title>Genome sequence of the endocellular bacterial symbiont of aphids Buchnera sp. APS.</title>
        <authorList>
            <person name="Shigenobu S."/>
            <person name="Watanabe H."/>
            <person name="Hattori M."/>
            <person name="Sakaki Y."/>
            <person name="Ishikawa H."/>
        </authorList>
    </citation>
    <scope>NUCLEOTIDE SEQUENCE [LARGE SCALE GENOMIC DNA]</scope>
    <source>
        <strain>APS</strain>
    </source>
</reference>
<accession>P57299</accession>